<name>HJC_SULAC</name>
<feature type="chain" id="PRO_0000459124" description="Crossover junction endodeoxyribonuclease Hjc">
    <location>
        <begin position="1"/>
        <end position="143"/>
    </location>
</feature>
<feature type="active site" evidence="1">
    <location>
        <position position="31"/>
    </location>
</feature>
<feature type="binding site" evidence="1">
    <location>
        <position position="11"/>
    </location>
    <ligand>
        <name>Mg(2+)</name>
        <dbReference type="ChEBI" id="CHEBI:18420"/>
    </ligand>
</feature>
<feature type="binding site" evidence="1">
    <location>
        <position position="41"/>
    </location>
    <ligand>
        <name>Mg(2+)</name>
        <dbReference type="ChEBI" id="CHEBI:18420"/>
    </ligand>
</feature>
<feature type="binding site" evidence="1">
    <location>
        <position position="54"/>
    </location>
    <ligand>
        <name>Mg(2+)</name>
        <dbReference type="ChEBI" id="CHEBI:18420"/>
    </ligand>
</feature>
<feature type="site" description="Transition state stabilizer" evidence="1">
    <location>
        <position position="56"/>
    </location>
</feature>
<gene>
    <name evidence="1 3" type="primary">hjc</name>
    <name evidence="5" type="ordered locus">Saci_1558</name>
</gene>
<reference evidence="5" key="1">
    <citation type="journal article" date="2005" name="J. Bacteriol.">
        <title>The genome of Sulfolobus acidocaldarius, a model organism of the Crenarchaeota.</title>
        <authorList>
            <person name="Chen L."/>
            <person name="Bruegger K."/>
            <person name="Skovgaard M."/>
            <person name="Redder P."/>
            <person name="She Q."/>
            <person name="Torarinsson E."/>
            <person name="Greve B."/>
            <person name="Awayez M."/>
            <person name="Zibat A."/>
            <person name="Klenk H.-P."/>
            <person name="Garrett R.A."/>
        </authorList>
    </citation>
    <scope>NUCLEOTIDE SEQUENCE [LARGE SCALE GENOMIC DNA]</scope>
    <source>
        <strain>ATCC 33909 / DSM 639 / JCM 8929 / NBRC 15157 / NCIMB 11770</strain>
    </source>
</reference>
<reference key="2">
    <citation type="journal article" date="2022" name="Int. J. Mol. Sci.">
        <title>Genetic Study of Four Candidate Holliday Junction Processing Proteins in the Thermophilic Crenarchaeon Sulfolobus acidocaldarius.</title>
        <authorList>
            <person name="Matsuda R."/>
            <person name="Suzuki S."/>
            <person name="Kurosawa N."/>
        </authorList>
    </citation>
    <scope>FUNCTION</scope>
    <scope>DISRUPTION PHENOTYPE</scope>
    <source>
        <strain>MR31 / DP-1</strain>
    </source>
</reference>
<protein>
    <recommendedName>
        <fullName evidence="1">Crossover junction endodeoxyribonuclease Hjc</fullName>
        <shortName evidence="1">Hjc</shortName>
        <ecNumber evidence="1">3.1.21.10</ecNumber>
    </recommendedName>
    <alternativeName>
        <fullName evidence="1">Holliday junction resolvase Hjc</fullName>
    </alternativeName>
</protein>
<organism>
    <name type="scientific">Sulfolobus acidocaldarius (strain ATCC 33909 / DSM 639 / JCM 8929 / NBRC 15157 / NCIMB 11770)</name>
    <dbReference type="NCBI Taxonomy" id="330779"/>
    <lineage>
        <taxon>Archaea</taxon>
        <taxon>Thermoproteota</taxon>
        <taxon>Thermoprotei</taxon>
        <taxon>Sulfolobales</taxon>
        <taxon>Sulfolobaceae</taxon>
        <taxon>Sulfolobus</taxon>
    </lineage>
</organism>
<proteinExistence type="inferred from homology"/>
<accession>Q4J8L0</accession>
<dbReference type="EC" id="3.1.21.10" evidence="1"/>
<dbReference type="EMBL" id="CP000077">
    <property type="protein sequence ID" value="AAY80871.1"/>
    <property type="molecule type" value="Genomic_DNA"/>
</dbReference>
<dbReference type="RefSeq" id="WP_011278373.1">
    <property type="nucleotide sequence ID" value="NC_007181.1"/>
</dbReference>
<dbReference type="SMR" id="Q4J8L0"/>
<dbReference type="STRING" id="330779.Saci_1558"/>
<dbReference type="GeneID" id="14552051"/>
<dbReference type="KEGG" id="sai:Saci_1558"/>
<dbReference type="PATRIC" id="fig|330779.12.peg.1498"/>
<dbReference type="eggNOG" id="arCOG00919">
    <property type="taxonomic scope" value="Archaea"/>
</dbReference>
<dbReference type="HOGENOM" id="CLU_139546_1_0_2"/>
<dbReference type="Proteomes" id="UP000001018">
    <property type="component" value="Chromosome"/>
</dbReference>
<dbReference type="GO" id="GO:0008821">
    <property type="term" value="F:crossover junction DNA endonuclease activity"/>
    <property type="evidence" value="ECO:0007669"/>
    <property type="project" value="UniProtKB-UniRule"/>
</dbReference>
<dbReference type="GO" id="GO:0003677">
    <property type="term" value="F:DNA binding"/>
    <property type="evidence" value="ECO:0007669"/>
    <property type="project" value="UniProtKB-KW"/>
</dbReference>
<dbReference type="GO" id="GO:0000287">
    <property type="term" value="F:magnesium ion binding"/>
    <property type="evidence" value="ECO:0007669"/>
    <property type="project" value="UniProtKB-UniRule"/>
</dbReference>
<dbReference type="GO" id="GO:0006310">
    <property type="term" value="P:DNA recombination"/>
    <property type="evidence" value="ECO:0007669"/>
    <property type="project" value="UniProtKB-UniRule"/>
</dbReference>
<dbReference type="GO" id="GO:0006281">
    <property type="term" value="P:DNA repair"/>
    <property type="evidence" value="ECO:0007669"/>
    <property type="project" value="UniProtKB-UniRule"/>
</dbReference>
<dbReference type="Gene3D" id="3.40.1350.10">
    <property type="match status" value="1"/>
</dbReference>
<dbReference type="HAMAP" id="MF_01490">
    <property type="entry name" value="HJ_Resolv_Hjc"/>
    <property type="match status" value="1"/>
</dbReference>
<dbReference type="InterPro" id="IPR002732">
    <property type="entry name" value="Hjc"/>
</dbReference>
<dbReference type="InterPro" id="IPR014428">
    <property type="entry name" value="Hjc_arc"/>
</dbReference>
<dbReference type="InterPro" id="IPR011335">
    <property type="entry name" value="Restrct_endonuc-II-like"/>
</dbReference>
<dbReference type="InterPro" id="IPR011856">
    <property type="entry name" value="tRNA_endonuc-like_dom_sf"/>
</dbReference>
<dbReference type="NCBIfam" id="NF040854">
    <property type="entry name" value="Hol_resolv_Hjc"/>
    <property type="match status" value="1"/>
</dbReference>
<dbReference type="PANTHER" id="PTHR39651">
    <property type="entry name" value="HOLLIDAY JUNCTION RESOLVASE HJC"/>
    <property type="match status" value="1"/>
</dbReference>
<dbReference type="PANTHER" id="PTHR39651:SF1">
    <property type="entry name" value="HOLLIDAY JUNCTION RESOLVASE HJC"/>
    <property type="match status" value="1"/>
</dbReference>
<dbReference type="Pfam" id="PF01870">
    <property type="entry name" value="Hjc"/>
    <property type="match status" value="1"/>
</dbReference>
<dbReference type="PIRSF" id="PIRSF004985">
    <property type="entry name" value="Hlld_jn_rslvs_ar"/>
    <property type="match status" value="1"/>
</dbReference>
<dbReference type="SUPFAM" id="SSF52980">
    <property type="entry name" value="Restriction endonuclease-like"/>
    <property type="match status" value="1"/>
</dbReference>
<comment type="function">
    <text evidence="1">A structure-specific endonuclease that resolves Holliday junction (HJ) intermediates during genetic recombination. Cleaves 4-way DNA junctions introducing paired nicks in opposing strands, leaving a 5'-terminal phosphate and a 3'-terminal hydroxyl group that are ligated to produce recombinant products.</text>
</comment>
<comment type="function">
    <text evidence="2">Redundant function with Holliday junction resolvase Hje.</text>
</comment>
<comment type="catalytic activity">
    <reaction evidence="1">
        <text>Endonucleolytic cleavage at a junction such as a reciprocal single-stranded crossover between two homologous DNA duplexes (Holliday junction).</text>
        <dbReference type="EC" id="3.1.21.10"/>
    </reaction>
</comment>
<comment type="cofactor">
    <cofactor evidence="1">
        <name>Mg(2+)</name>
        <dbReference type="ChEBI" id="CHEBI:18420"/>
    </cofactor>
    <text evidence="1">Binds 1 Mg(2+) ion per subunit.</text>
</comment>
<comment type="subunit">
    <text evidence="1">Homodimer.</text>
</comment>
<comment type="disruption phenotype">
    <text evidence="2">Not essential, it can be disrupted. No change in sensitivity to mitomycin C. Double hjc-hje mutants cannot be made, double hjc-pina mutants grow more slowly at 55 degrees Celsius (versus 65 or 75 degrees) and do not grow to the same cell density as wild-type.</text>
</comment>
<comment type="miscellaneous">
    <text evidence="4">A second Holliday junction resolving enzyme, Hje, probably with different substrate specificity, exists in this organism.</text>
</comment>
<comment type="similarity">
    <text evidence="1">Belongs to the Holliday junction resolvase Hjc family.</text>
</comment>
<evidence type="ECO:0000255" key="1">
    <source>
        <dbReference type="HAMAP-Rule" id="MF_01490"/>
    </source>
</evidence>
<evidence type="ECO:0000269" key="2">
    <source>
    </source>
</evidence>
<evidence type="ECO:0000303" key="3">
    <source>
    </source>
</evidence>
<evidence type="ECO:0000305" key="4">
    <source>
    </source>
</evidence>
<evidence type="ECO:0000312" key="5">
    <source>
        <dbReference type="EMBL" id="AAY80871.1"/>
    </source>
</evidence>
<keyword id="KW-0227">DNA damage</keyword>
<keyword id="KW-0233">DNA recombination</keyword>
<keyword id="KW-0234">DNA repair</keyword>
<keyword id="KW-0238">DNA-binding</keyword>
<keyword id="KW-0255">Endonuclease</keyword>
<keyword id="KW-0378">Hydrolase</keyword>
<keyword id="KW-0460">Magnesium</keyword>
<keyword id="KW-0479">Metal-binding</keyword>
<keyword id="KW-0540">Nuclease</keyword>
<keyword id="KW-1185">Reference proteome</keyword>
<sequence length="143" mass="16095">MSNKTKGSTLERYLVSRLRDKGFAVIRAPASGSNRKDHVPDVIAMKSGVIILIEMKSRKNGNKIYIQKEQAEGIKEFAKKSGGELFLGAKIAKDLKFLRFDELRRTEAGNYVADLETIKSGMDFDELVRYVEGKISKTLDSFM</sequence>